<organism>
    <name type="scientific">Sulfurisphaera tokodaii (strain DSM 16993 / JCM 10545 / NBRC 100140 / 7)</name>
    <name type="common">Sulfolobus tokodaii</name>
    <dbReference type="NCBI Taxonomy" id="273063"/>
    <lineage>
        <taxon>Archaea</taxon>
        <taxon>Thermoproteota</taxon>
        <taxon>Thermoprotei</taxon>
        <taxon>Sulfolobales</taxon>
        <taxon>Sulfolobaceae</taxon>
        <taxon>Sulfurisphaera</taxon>
    </lineage>
</organism>
<reference key="1">
    <citation type="journal article" date="2001" name="DNA Res.">
        <title>Complete genome sequence of an aerobic thermoacidophilic Crenarchaeon, Sulfolobus tokodaii strain7.</title>
        <authorList>
            <person name="Kawarabayasi Y."/>
            <person name="Hino Y."/>
            <person name="Horikawa H."/>
            <person name="Jin-no K."/>
            <person name="Takahashi M."/>
            <person name="Sekine M."/>
            <person name="Baba S."/>
            <person name="Ankai A."/>
            <person name="Kosugi H."/>
            <person name="Hosoyama A."/>
            <person name="Fukui S."/>
            <person name="Nagai Y."/>
            <person name="Nishijima K."/>
            <person name="Otsuka R."/>
            <person name="Nakazawa H."/>
            <person name="Takamiya M."/>
            <person name="Kato Y."/>
            <person name="Yoshizawa T."/>
            <person name="Tanaka T."/>
            <person name="Kudoh Y."/>
            <person name="Yamazaki J."/>
            <person name="Kushida N."/>
            <person name="Oguchi A."/>
            <person name="Aoki K."/>
            <person name="Masuda S."/>
            <person name="Yanagii M."/>
            <person name="Nishimura M."/>
            <person name="Yamagishi A."/>
            <person name="Oshima T."/>
            <person name="Kikuchi H."/>
        </authorList>
    </citation>
    <scope>NUCLEOTIDE SEQUENCE [LARGE SCALE GENOMIC DNA]</scope>
    <source>
        <strain>DSM 16993 / JCM 10545 / NBRC 100140 / 7</strain>
    </source>
</reference>
<keyword id="KW-0067">ATP-binding</keyword>
<keyword id="KW-0436">Ligase</keyword>
<keyword id="KW-0460">Magnesium</keyword>
<keyword id="KW-0479">Metal-binding</keyword>
<keyword id="KW-0547">Nucleotide-binding</keyword>
<keyword id="KW-0658">Purine biosynthesis</keyword>
<keyword id="KW-1185">Reference proteome</keyword>
<evidence type="ECO:0000255" key="1">
    <source>
        <dbReference type="HAMAP-Rule" id="MF_01643"/>
    </source>
</evidence>
<evidence type="ECO:0000305" key="2"/>
<accession>Q96Y60</accession>
<comment type="function">
    <text evidence="1">Involved in the de novo purine biosynthesis. Catalyzes the transfer of formate to 5-phospho-ribosyl-glycinamide (GAR), producing 5-phospho-ribosyl-N-formylglycinamide (FGAR). Formate is provided by PurU via hydrolysis of 10-formyl-tetrahydrofolate.</text>
</comment>
<comment type="catalytic activity">
    <reaction evidence="1">
        <text>N(1)-(5-phospho-beta-D-ribosyl)glycinamide + formate + ATP = N(2)-formyl-N(1)-(5-phospho-beta-D-ribosyl)glycinamide + ADP + phosphate + H(+)</text>
        <dbReference type="Rhea" id="RHEA:24829"/>
        <dbReference type="ChEBI" id="CHEBI:15378"/>
        <dbReference type="ChEBI" id="CHEBI:15740"/>
        <dbReference type="ChEBI" id="CHEBI:30616"/>
        <dbReference type="ChEBI" id="CHEBI:43474"/>
        <dbReference type="ChEBI" id="CHEBI:143788"/>
        <dbReference type="ChEBI" id="CHEBI:147286"/>
        <dbReference type="ChEBI" id="CHEBI:456216"/>
        <dbReference type="EC" id="6.3.1.21"/>
    </reaction>
    <physiologicalReaction direction="left-to-right" evidence="1">
        <dbReference type="Rhea" id="RHEA:24830"/>
    </physiologicalReaction>
</comment>
<comment type="pathway">
    <text evidence="1">Purine metabolism; IMP biosynthesis via de novo pathway; N(2)-formyl-N(1)-(5-phospho-D-ribosyl)glycinamide from N(1)-(5-phospho-D-ribosyl)glycinamide (formate route): step 1/1.</text>
</comment>
<comment type="subunit">
    <text evidence="1">Homodimer.</text>
</comment>
<comment type="similarity">
    <text evidence="1">Belongs to the PurK/PurT family.</text>
</comment>
<comment type="sequence caution" evidence="2">
    <conflict type="erroneous initiation">
        <sequence resource="EMBL-CDS" id="BAB67417"/>
    </conflict>
</comment>
<feature type="chain" id="PRO_0000319289" description="Formate-dependent phosphoribosylglycinamide formyltransferase">
    <location>
        <begin position="1"/>
        <end position="397"/>
    </location>
</feature>
<feature type="domain" description="ATP-grasp" evidence="1">
    <location>
        <begin position="118"/>
        <end position="313"/>
    </location>
</feature>
<feature type="binding site" evidence="1">
    <location>
        <begin position="21"/>
        <end position="22"/>
    </location>
    <ligand>
        <name>N(1)-(5-phospho-beta-D-ribosyl)glycinamide</name>
        <dbReference type="ChEBI" id="CHEBI:143788"/>
    </ligand>
</feature>
<feature type="binding site" evidence="1">
    <location>
        <position position="81"/>
    </location>
    <ligand>
        <name>N(1)-(5-phospho-beta-D-ribosyl)glycinamide</name>
        <dbReference type="ChEBI" id="CHEBI:143788"/>
    </ligand>
</feature>
<feature type="binding site" evidence="1">
    <location>
        <position position="113"/>
    </location>
    <ligand>
        <name>ATP</name>
        <dbReference type="ChEBI" id="CHEBI:30616"/>
    </ligand>
</feature>
<feature type="binding site" evidence="1">
    <location>
        <position position="154"/>
    </location>
    <ligand>
        <name>ATP</name>
        <dbReference type="ChEBI" id="CHEBI:30616"/>
    </ligand>
</feature>
<feature type="binding site" evidence="1">
    <location>
        <begin position="194"/>
        <end position="197"/>
    </location>
    <ligand>
        <name>ATP</name>
        <dbReference type="ChEBI" id="CHEBI:30616"/>
    </ligand>
</feature>
<feature type="binding site" evidence="1">
    <location>
        <position position="202"/>
    </location>
    <ligand>
        <name>ATP</name>
        <dbReference type="ChEBI" id="CHEBI:30616"/>
    </ligand>
</feature>
<feature type="binding site" evidence="1">
    <location>
        <position position="272"/>
    </location>
    <ligand>
        <name>Mg(2+)</name>
        <dbReference type="ChEBI" id="CHEBI:18420"/>
    </ligand>
</feature>
<feature type="binding site" evidence="1">
    <location>
        <position position="284"/>
    </location>
    <ligand>
        <name>Mg(2+)</name>
        <dbReference type="ChEBI" id="CHEBI:18420"/>
    </ligand>
</feature>
<feature type="binding site" evidence="1">
    <location>
        <position position="291"/>
    </location>
    <ligand>
        <name>N(1)-(5-phospho-beta-D-ribosyl)glycinamide</name>
        <dbReference type="ChEBI" id="CHEBI:143788"/>
    </ligand>
</feature>
<feature type="binding site" evidence="1">
    <location>
        <position position="361"/>
    </location>
    <ligand>
        <name>N(1)-(5-phospho-beta-D-ribosyl)glycinamide</name>
        <dbReference type="ChEBI" id="CHEBI:143788"/>
    </ligand>
</feature>
<feature type="binding site" evidence="1">
    <location>
        <begin position="368"/>
        <end position="369"/>
    </location>
    <ligand>
        <name>N(1)-(5-phospho-beta-D-ribosyl)glycinamide</name>
        <dbReference type="ChEBI" id="CHEBI:143788"/>
    </ligand>
</feature>
<proteinExistence type="inferred from homology"/>
<gene>
    <name evidence="1" type="primary">purT</name>
    <name type="ordered locus">STK_23070</name>
</gene>
<sequence>MEIGTPLFEGAKKLLWLGGGELGKEMVIEAQRMGIETVVVDRYDMAPAMHVAHRKYVVNMLDGNAIKSIIKKENPDAIITEIEAINTDALLELESEGYKVIPNAKAVKICMNRIELRKLAAEKVKVPTTQYGFAENPEEVKKICKDIGYPCIIKPEMSSSGHGHEVVYNESEVEQKFKEAITHARGKSEQVIVEEYVKIDRELTVLTYRYLDDKGVVTKTITPIEHQRPSDVYYYVESWHPSTVDKDIIERAQEYATRVVNELGGFGIFGVEIIVSGNRVLFSEVSPRPHDTGLVTMASLDINEFQIHVRSALGLPTPEVKIVSPAAAHVILANNEGWAPKFLNVEKALQIPGVQIRLFGKPSTYYKRRMGVVLATGNTVEEAKEKARKAASLVLVT</sequence>
<protein>
    <recommendedName>
        <fullName evidence="1">Formate-dependent phosphoribosylglycinamide formyltransferase</fullName>
        <ecNumber evidence="1">6.3.1.21</ecNumber>
    </recommendedName>
    <alternativeName>
        <fullName evidence="1">5'-phosphoribosylglycinamide transformylase 2</fullName>
    </alternativeName>
    <alternativeName>
        <fullName evidence="1">Formate-dependent GAR transformylase</fullName>
    </alternativeName>
    <alternativeName>
        <fullName evidence="1">GAR transformylase 2</fullName>
        <shortName evidence="1">GART 2</shortName>
    </alternativeName>
    <alternativeName>
        <fullName evidence="1">Non-folate glycinamide ribonucleotide transformylase</fullName>
    </alternativeName>
    <alternativeName>
        <fullName evidence="1">Phosphoribosylglycinamide formyltransferase 2</fullName>
    </alternativeName>
</protein>
<dbReference type="EC" id="6.3.1.21" evidence="1"/>
<dbReference type="EMBL" id="BA000023">
    <property type="protein sequence ID" value="BAB67417.1"/>
    <property type="status" value="ALT_INIT"/>
    <property type="molecule type" value="Genomic_DNA"/>
</dbReference>
<dbReference type="RefSeq" id="WP_052846770.1">
    <property type="nucleotide sequence ID" value="NC_003106.2"/>
</dbReference>
<dbReference type="SMR" id="Q96Y60"/>
<dbReference type="STRING" id="273063.STK_23070"/>
<dbReference type="GeneID" id="1460390"/>
<dbReference type="KEGG" id="sto:STK_23070"/>
<dbReference type="PATRIC" id="fig|273063.9.peg.2612"/>
<dbReference type="eggNOG" id="arCOG01598">
    <property type="taxonomic scope" value="Archaea"/>
</dbReference>
<dbReference type="OrthoDB" id="9299at2157"/>
<dbReference type="UniPathway" id="UPA00074">
    <property type="reaction ID" value="UER00127"/>
</dbReference>
<dbReference type="Proteomes" id="UP000001015">
    <property type="component" value="Chromosome"/>
</dbReference>
<dbReference type="GO" id="GO:0005829">
    <property type="term" value="C:cytosol"/>
    <property type="evidence" value="ECO:0007669"/>
    <property type="project" value="TreeGrafter"/>
</dbReference>
<dbReference type="GO" id="GO:0005524">
    <property type="term" value="F:ATP binding"/>
    <property type="evidence" value="ECO:0007669"/>
    <property type="project" value="UniProtKB-UniRule"/>
</dbReference>
<dbReference type="GO" id="GO:0000287">
    <property type="term" value="F:magnesium ion binding"/>
    <property type="evidence" value="ECO:0007669"/>
    <property type="project" value="InterPro"/>
</dbReference>
<dbReference type="GO" id="GO:0043815">
    <property type="term" value="F:phosphoribosylglycinamide formyltransferase 2 activity"/>
    <property type="evidence" value="ECO:0007669"/>
    <property type="project" value="UniProtKB-UniRule"/>
</dbReference>
<dbReference type="GO" id="GO:0004644">
    <property type="term" value="F:phosphoribosylglycinamide formyltransferase activity"/>
    <property type="evidence" value="ECO:0007669"/>
    <property type="project" value="InterPro"/>
</dbReference>
<dbReference type="GO" id="GO:0006189">
    <property type="term" value="P:'de novo' IMP biosynthetic process"/>
    <property type="evidence" value="ECO:0007669"/>
    <property type="project" value="UniProtKB-UniRule"/>
</dbReference>
<dbReference type="FunFam" id="3.40.50.20:FF:000022">
    <property type="entry name" value="Formate-dependent phosphoribosylglycinamide formyltransferase"/>
    <property type="match status" value="1"/>
</dbReference>
<dbReference type="Gene3D" id="3.40.50.20">
    <property type="match status" value="1"/>
</dbReference>
<dbReference type="Gene3D" id="3.30.1490.20">
    <property type="entry name" value="ATP-grasp fold, A domain"/>
    <property type="match status" value="1"/>
</dbReference>
<dbReference type="Gene3D" id="3.30.470.20">
    <property type="entry name" value="ATP-grasp fold, B domain"/>
    <property type="match status" value="1"/>
</dbReference>
<dbReference type="HAMAP" id="MF_01643">
    <property type="entry name" value="PurT"/>
    <property type="match status" value="1"/>
</dbReference>
<dbReference type="InterPro" id="IPR011761">
    <property type="entry name" value="ATP-grasp"/>
</dbReference>
<dbReference type="InterPro" id="IPR003135">
    <property type="entry name" value="ATP-grasp_carboxylate-amine"/>
</dbReference>
<dbReference type="InterPro" id="IPR013815">
    <property type="entry name" value="ATP_grasp_subdomain_1"/>
</dbReference>
<dbReference type="InterPro" id="IPR016185">
    <property type="entry name" value="PreATP-grasp_dom_sf"/>
</dbReference>
<dbReference type="InterPro" id="IPR005862">
    <property type="entry name" value="PurT"/>
</dbReference>
<dbReference type="InterPro" id="IPR054350">
    <property type="entry name" value="PurT/PurK_preATP-grasp"/>
</dbReference>
<dbReference type="InterPro" id="IPR048740">
    <property type="entry name" value="PurT_C"/>
</dbReference>
<dbReference type="NCBIfam" id="NF006766">
    <property type="entry name" value="PRK09288.1"/>
    <property type="match status" value="1"/>
</dbReference>
<dbReference type="PANTHER" id="PTHR43055">
    <property type="entry name" value="FORMATE-DEPENDENT PHOSPHORIBOSYLGLYCINAMIDE FORMYLTRANSFERASE"/>
    <property type="match status" value="1"/>
</dbReference>
<dbReference type="PANTHER" id="PTHR43055:SF1">
    <property type="entry name" value="FORMATE-DEPENDENT PHOSPHORIBOSYLGLYCINAMIDE FORMYLTRANSFERASE"/>
    <property type="match status" value="1"/>
</dbReference>
<dbReference type="Pfam" id="PF02222">
    <property type="entry name" value="ATP-grasp"/>
    <property type="match status" value="1"/>
</dbReference>
<dbReference type="Pfam" id="PF21244">
    <property type="entry name" value="PurT_C"/>
    <property type="match status" value="1"/>
</dbReference>
<dbReference type="Pfam" id="PF22660">
    <property type="entry name" value="RS_preATP-grasp-like"/>
    <property type="match status" value="1"/>
</dbReference>
<dbReference type="SUPFAM" id="SSF56059">
    <property type="entry name" value="Glutathione synthetase ATP-binding domain-like"/>
    <property type="match status" value="1"/>
</dbReference>
<dbReference type="SUPFAM" id="SSF52440">
    <property type="entry name" value="PreATP-grasp domain"/>
    <property type="match status" value="1"/>
</dbReference>
<dbReference type="PROSITE" id="PS50975">
    <property type="entry name" value="ATP_GRASP"/>
    <property type="match status" value="1"/>
</dbReference>
<name>PURT_SULTO</name>